<dbReference type="EC" id="2.7.7.6" evidence="1"/>
<dbReference type="EMBL" id="AM398681">
    <property type="protein sequence ID" value="CAL43396.1"/>
    <property type="molecule type" value="Genomic_DNA"/>
</dbReference>
<dbReference type="RefSeq" id="WP_011963445.1">
    <property type="nucleotide sequence ID" value="NC_009613.3"/>
</dbReference>
<dbReference type="RefSeq" id="YP_001296207.1">
    <property type="nucleotide sequence ID" value="NC_009613.3"/>
</dbReference>
<dbReference type="SMR" id="A6GZ73"/>
<dbReference type="STRING" id="402612.FP1313"/>
<dbReference type="EnsemblBacteria" id="CAL43396">
    <property type="protein sequence ID" value="CAL43396"/>
    <property type="gene ID" value="FP1313"/>
</dbReference>
<dbReference type="KEGG" id="fps:FP1313"/>
<dbReference type="PATRIC" id="fig|402612.5.peg.1330"/>
<dbReference type="eggNOG" id="COG0202">
    <property type="taxonomic scope" value="Bacteria"/>
</dbReference>
<dbReference type="HOGENOM" id="CLU_053084_0_1_10"/>
<dbReference type="OrthoDB" id="9805706at2"/>
<dbReference type="Proteomes" id="UP000006394">
    <property type="component" value="Chromosome"/>
</dbReference>
<dbReference type="GO" id="GO:0005737">
    <property type="term" value="C:cytoplasm"/>
    <property type="evidence" value="ECO:0007669"/>
    <property type="project" value="UniProtKB-ARBA"/>
</dbReference>
<dbReference type="GO" id="GO:0000428">
    <property type="term" value="C:DNA-directed RNA polymerase complex"/>
    <property type="evidence" value="ECO:0007669"/>
    <property type="project" value="UniProtKB-KW"/>
</dbReference>
<dbReference type="GO" id="GO:0003677">
    <property type="term" value="F:DNA binding"/>
    <property type="evidence" value="ECO:0007669"/>
    <property type="project" value="UniProtKB-UniRule"/>
</dbReference>
<dbReference type="GO" id="GO:0003899">
    <property type="term" value="F:DNA-directed RNA polymerase activity"/>
    <property type="evidence" value="ECO:0007669"/>
    <property type="project" value="UniProtKB-UniRule"/>
</dbReference>
<dbReference type="GO" id="GO:0046983">
    <property type="term" value="F:protein dimerization activity"/>
    <property type="evidence" value="ECO:0007669"/>
    <property type="project" value="InterPro"/>
</dbReference>
<dbReference type="GO" id="GO:0006351">
    <property type="term" value="P:DNA-templated transcription"/>
    <property type="evidence" value="ECO:0007669"/>
    <property type="project" value="UniProtKB-UniRule"/>
</dbReference>
<dbReference type="CDD" id="cd06928">
    <property type="entry name" value="RNAP_alpha_NTD"/>
    <property type="match status" value="1"/>
</dbReference>
<dbReference type="FunFam" id="2.170.120.12:FF:000001">
    <property type="entry name" value="DNA-directed RNA polymerase subunit alpha"/>
    <property type="match status" value="1"/>
</dbReference>
<dbReference type="Gene3D" id="1.10.150.20">
    <property type="entry name" value="5' to 3' exonuclease, C-terminal subdomain"/>
    <property type="match status" value="1"/>
</dbReference>
<dbReference type="Gene3D" id="2.170.120.12">
    <property type="entry name" value="DNA-directed RNA polymerase, insert domain"/>
    <property type="match status" value="1"/>
</dbReference>
<dbReference type="Gene3D" id="3.30.1360.10">
    <property type="entry name" value="RNA polymerase, RBP11-like subunit"/>
    <property type="match status" value="1"/>
</dbReference>
<dbReference type="HAMAP" id="MF_00059">
    <property type="entry name" value="RNApol_bact_RpoA"/>
    <property type="match status" value="1"/>
</dbReference>
<dbReference type="InterPro" id="IPR011262">
    <property type="entry name" value="DNA-dir_RNA_pol_insert"/>
</dbReference>
<dbReference type="InterPro" id="IPR011263">
    <property type="entry name" value="DNA-dir_RNA_pol_RpoA/D/Rpb3"/>
</dbReference>
<dbReference type="InterPro" id="IPR011773">
    <property type="entry name" value="DNA-dir_RpoA"/>
</dbReference>
<dbReference type="InterPro" id="IPR036603">
    <property type="entry name" value="RBP11-like"/>
</dbReference>
<dbReference type="InterPro" id="IPR011260">
    <property type="entry name" value="RNAP_asu_C"/>
</dbReference>
<dbReference type="InterPro" id="IPR036643">
    <property type="entry name" value="RNApol_insert_sf"/>
</dbReference>
<dbReference type="NCBIfam" id="NF003513">
    <property type="entry name" value="PRK05182.1-2"/>
    <property type="match status" value="1"/>
</dbReference>
<dbReference type="NCBIfam" id="NF003516">
    <property type="entry name" value="PRK05182.2-2"/>
    <property type="match status" value="1"/>
</dbReference>
<dbReference type="NCBIfam" id="NF003519">
    <property type="entry name" value="PRK05182.2-5"/>
    <property type="match status" value="1"/>
</dbReference>
<dbReference type="NCBIfam" id="TIGR02027">
    <property type="entry name" value="rpoA"/>
    <property type="match status" value="1"/>
</dbReference>
<dbReference type="Pfam" id="PF01000">
    <property type="entry name" value="RNA_pol_A_bac"/>
    <property type="match status" value="1"/>
</dbReference>
<dbReference type="Pfam" id="PF03118">
    <property type="entry name" value="RNA_pol_A_CTD"/>
    <property type="match status" value="1"/>
</dbReference>
<dbReference type="Pfam" id="PF01193">
    <property type="entry name" value="RNA_pol_L"/>
    <property type="match status" value="1"/>
</dbReference>
<dbReference type="SMART" id="SM00662">
    <property type="entry name" value="RPOLD"/>
    <property type="match status" value="1"/>
</dbReference>
<dbReference type="SUPFAM" id="SSF47789">
    <property type="entry name" value="C-terminal domain of RNA polymerase alpha subunit"/>
    <property type="match status" value="1"/>
</dbReference>
<dbReference type="SUPFAM" id="SSF56553">
    <property type="entry name" value="Insert subdomain of RNA polymerase alpha subunit"/>
    <property type="match status" value="1"/>
</dbReference>
<dbReference type="SUPFAM" id="SSF55257">
    <property type="entry name" value="RBP11-like subunits of RNA polymerase"/>
    <property type="match status" value="1"/>
</dbReference>
<keyword id="KW-0240">DNA-directed RNA polymerase</keyword>
<keyword id="KW-0548">Nucleotidyltransferase</keyword>
<keyword id="KW-1185">Reference proteome</keyword>
<keyword id="KW-0804">Transcription</keyword>
<keyword id="KW-0808">Transferase</keyword>
<organism>
    <name type="scientific">Flavobacterium psychrophilum (strain ATCC 49511 / DSM 21280 / CIP 103535 / JIP02/86)</name>
    <dbReference type="NCBI Taxonomy" id="402612"/>
    <lineage>
        <taxon>Bacteria</taxon>
        <taxon>Pseudomonadati</taxon>
        <taxon>Bacteroidota</taxon>
        <taxon>Flavobacteriia</taxon>
        <taxon>Flavobacteriales</taxon>
        <taxon>Flavobacteriaceae</taxon>
        <taxon>Flavobacterium</taxon>
    </lineage>
</organism>
<protein>
    <recommendedName>
        <fullName evidence="1">DNA-directed RNA polymerase subunit alpha</fullName>
        <shortName evidence="1">RNAP subunit alpha</shortName>
        <ecNumber evidence="1">2.7.7.6</ecNumber>
    </recommendedName>
    <alternativeName>
        <fullName evidence="1">RNA polymerase subunit alpha</fullName>
    </alternativeName>
    <alternativeName>
        <fullName evidence="1">Transcriptase subunit alpha</fullName>
    </alternativeName>
</protein>
<evidence type="ECO:0000255" key="1">
    <source>
        <dbReference type="HAMAP-Rule" id="MF_00059"/>
    </source>
</evidence>
<proteinExistence type="inferred from homology"/>
<feature type="chain" id="PRO_0000323633" description="DNA-directed RNA polymerase subunit alpha">
    <location>
        <begin position="1"/>
        <end position="330"/>
    </location>
</feature>
<feature type="region of interest" description="Alpha N-terminal domain (alpha-NTD)" evidence="1">
    <location>
        <begin position="1"/>
        <end position="231"/>
    </location>
</feature>
<feature type="region of interest" description="Alpha C-terminal domain (alpha-CTD)" evidence="1">
    <location>
        <begin position="253"/>
        <end position="330"/>
    </location>
</feature>
<comment type="function">
    <text evidence="1">DNA-dependent RNA polymerase catalyzes the transcription of DNA into RNA using the four ribonucleoside triphosphates as substrates.</text>
</comment>
<comment type="catalytic activity">
    <reaction evidence="1">
        <text>RNA(n) + a ribonucleoside 5'-triphosphate = RNA(n+1) + diphosphate</text>
        <dbReference type="Rhea" id="RHEA:21248"/>
        <dbReference type="Rhea" id="RHEA-COMP:14527"/>
        <dbReference type="Rhea" id="RHEA-COMP:17342"/>
        <dbReference type="ChEBI" id="CHEBI:33019"/>
        <dbReference type="ChEBI" id="CHEBI:61557"/>
        <dbReference type="ChEBI" id="CHEBI:140395"/>
        <dbReference type="EC" id="2.7.7.6"/>
    </reaction>
</comment>
<comment type="subunit">
    <text evidence="1">Homodimer. The RNAP catalytic core consists of 2 alpha, 1 beta, 1 beta' and 1 omega subunit. When a sigma factor is associated with the core the holoenzyme is formed, which can initiate transcription.</text>
</comment>
<comment type="domain">
    <text evidence="1">The N-terminal domain is essential for RNAP assembly and basal transcription, whereas the C-terminal domain is involved in interaction with transcriptional regulators and with upstream promoter elements.</text>
</comment>
<comment type="similarity">
    <text evidence="1">Belongs to the RNA polymerase alpha chain family.</text>
</comment>
<reference key="1">
    <citation type="journal article" date="2007" name="Nat. Biotechnol.">
        <title>Complete genome sequence of the fish pathogen Flavobacterium psychrophilum.</title>
        <authorList>
            <person name="Duchaud E."/>
            <person name="Boussaha M."/>
            <person name="Loux V."/>
            <person name="Bernardet J.-F."/>
            <person name="Michel C."/>
            <person name="Kerouault B."/>
            <person name="Mondot S."/>
            <person name="Nicolas P."/>
            <person name="Bossy R."/>
            <person name="Caron C."/>
            <person name="Bessieres P."/>
            <person name="Gibrat J.-F."/>
            <person name="Claverol S."/>
            <person name="Dumetz F."/>
            <person name="Le Henaff M."/>
            <person name="Benmansour A."/>
        </authorList>
    </citation>
    <scope>NUCLEOTIDE SEQUENCE [LARGE SCALE GENOMIC DNA]</scope>
    <source>
        <strain>ATCC 49511 / DSM 21280 / CIP 103535 / JIP02/86</strain>
    </source>
</reference>
<name>RPOA_FLAPJ</name>
<sequence length="330" mass="37392">MALFNFQKPDKVIMIDSTDFEGKFEFRPLEPGYGLTVGNALRRVLLSALEGYAITSIRIEGVDHEFSTIPGVVEDVTEIILSLKQVRFKRQIEDIDNESVTIAISGKNQITAGDFQKYISGFQVLNPELVICNLDSKVNFNMEMTIEKGRGYVPAEENKKQNAAIGTIFTDSIFTPVKNVKYAIENFRVEQKTDYEKLVFEIKTDGSINPKDALTEAAKVLIHHFMLFSDERITLEADEIAQTESYDEESLHMRQLLKTKLVDMDLSVRALNCLKAAEVDTLGDLVSFNKNDLMKFRNFGKKSLTELDELVAIKNLTFGMDLAKYKLDKE</sequence>
<accession>A6GZ73</accession>
<gene>
    <name evidence="1" type="primary">rpoA</name>
    <name type="ordered locus">FP1313</name>
</gene>